<sequence>MSSIPVIELSSRAREIFQLVVESYLGSGLPVGSKTLARQGVNLSPASIRYVLQELETKGLLLSPHISAGRMPTELGLRLFVNGMMQLSEPSEEERSAIEADVIRGHSPKERLVNATTTLSGLSACAGLVLVPKQELVLKQLGFVVLDDNRALAIIVGSDGSVENRVIELSSGFPASALTEASNYINAHFSGYSFSEAKKRLFSQIDLERSELDSAASDLIKRGLAVWSEDSRKRPVLIVRGQSHLLQDASEDLDRAKQLLEELEDKKEIAGLLEKVSESDAAQIFIGSENKLFSLSGSSVIASPYHGEDGHMVGVVAVIGPTRLNYGRIVPMVDFTAKTLSRIIA</sequence>
<gene>
    <name evidence="1" type="primary">hrcA</name>
    <name type="ordered locus">ZMO0015</name>
</gene>
<organism>
    <name type="scientific">Zymomonas mobilis subsp. mobilis (strain ATCC 31821 / ZM4 / CP4)</name>
    <dbReference type="NCBI Taxonomy" id="264203"/>
    <lineage>
        <taxon>Bacteria</taxon>
        <taxon>Pseudomonadati</taxon>
        <taxon>Pseudomonadota</taxon>
        <taxon>Alphaproteobacteria</taxon>
        <taxon>Sphingomonadales</taxon>
        <taxon>Zymomonadaceae</taxon>
        <taxon>Zymomonas</taxon>
    </lineage>
</organism>
<feature type="chain" id="PRO_0000182559" description="Heat-inducible transcription repressor HrcA">
    <location>
        <begin position="1"/>
        <end position="345"/>
    </location>
</feature>
<evidence type="ECO:0000255" key="1">
    <source>
        <dbReference type="HAMAP-Rule" id="MF_00081"/>
    </source>
</evidence>
<name>HRCA_ZYMMO</name>
<protein>
    <recommendedName>
        <fullName evidence="1">Heat-inducible transcription repressor HrcA</fullName>
    </recommendedName>
</protein>
<comment type="function">
    <text evidence="1">Negative regulator of class I heat shock genes (grpE-dnaK-dnaJ and groELS operons). Prevents heat-shock induction of these operons.</text>
</comment>
<comment type="similarity">
    <text evidence="1">Belongs to the HrcA family.</text>
</comment>
<proteinExistence type="inferred from homology"/>
<reference key="1">
    <citation type="journal article" date="2005" name="Nat. Biotechnol.">
        <title>The genome sequence of the ethanologenic bacterium Zymomonas mobilis ZM4.</title>
        <authorList>
            <person name="Seo J.-S."/>
            <person name="Chong H."/>
            <person name="Park H.S."/>
            <person name="Yoon K.-O."/>
            <person name="Jung C."/>
            <person name="Kim J.J."/>
            <person name="Hong J.H."/>
            <person name="Kim H."/>
            <person name="Kim J.-H."/>
            <person name="Kil J.-I."/>
            <person name="Park C.J."/>
            <person name="Oh H.-M."/>
            <person name="Lee J.-S."/>
            <person name="Jin S.-J."/>
            <person name="Um H.-W."/>
            <person name="Lee H.-J."/>
            <person name="Oh S.-J."/>
            <person name="Kim J.Y."/>
            <person name="Kang H.L."/>
            <person name="Lee S.Y."/>
            <person name="Lee K.J."/>
            <person name="Kang H.S."/>
        </authorList>
    </citation>
    <scope>NUCLEOTIDE SEQUENCE [LARGE SCALE GENOMIC DNA]</scope>
    <source>
        <strain>ATCC 31821 / ZM4 / CP4</strain>
    </source>
</reference>
<dbReference type="EMBL" id="AE008692">
    <property type="protein sequence ID" value="AAV88639.1"/>
    <property type="molecule type" value="Genomic_DNA"/>
</dbReference>
<dbReference type="RefSeq" id="WP_011240003.1">
    <property type="nucleotide sequence ID" value="NZ_CP035711.1"/>
</dbReference>
<dbReference type="SMR" id="Q5NRL5"/>
<dbReference type="STRING" id="264203.ZMO0015"/>
<dbReference type="GeneID" id="79904715"/>
<dbReference type="KEGG" id="zmo:ZMO0015"/>
<dbReference type="eggNOG" id="COG1420">
    <property type="taxonomic scope" value="Bacteria"/>
</dbReference>
<dbReference type="HOGENOM" id="CLU_050019_0_0_5"/>
<dbReference type="Proteomes" id="UP000001173">
    <property type="component" value="Chromosome"/>
</dbReference>
<dbReference type="GO" id="GO:0003677">
    <property type="term" value="F:DNA binding"/>
    <property type="evidence" value="ECO:0007669"/>
    <property type="project" value="InterPro"/>
</dbReference>
<dbReference type="GO" id="GO:0045892">
    <property type="term" value="P:negative regulation of DNA-templated transcription"/>
    <property type="evidence" value="ECO:0007669"/>
    <property type="project" value="UniProtKB-UniRule"/>
</dbReference>
<dbReference type="Gene3D" id="3.30.450.40">
    <property type="match status" value="1"/>
</dbReference>
<dbReference type="Gene3D" id="1.10.10.10">
    <property type="entry name" value="Winged helix-like DNA-binding domain superfamily/Winged helix DNA-binding domain"/>
    <property type="match status" value="1"/>
</dbReference>
<dbReference type="HAMAP" id="MF_00081">
    <property type="entry name" value="HrcA"/>
    <property type="match status" value="1"/>
</dbReference>
<dbReference type="InterPro" id="IPR029016">
    <property type="entry name" value="GAF-like_dom_sf"/>
</dbReference>
<dbReference type="InterPro" id="IPR002571">
    <property type="entry name" value="HrcA"/>
</dbReference>
<dbReference type="InterPro" id="IPR021153">
    <property type="entry name" value="HrcA_C"/>
</dbReference>
<dbReference type="InterPro" id="IPR036388">
    <property type="entry name" value="WH-like_DNA-bd_sf"/>
</dbReference>
<dbReference type="InterPro" id="IPR036390">
    <property type="entry name" value="WH_DNA-bd_sf"/>
</dbReference>
<dbReference type="NCBIfam" id="TIGR00331">
    <property type="entry name" value="hrcA"/>
    <property type="match status" value="1"/>
</dbReference>
<dbReference type="PANTHER" id="PTHR34824">
    <property type="entry name" value="HEAT-INDUCIBLE TRANSCRIPTION REPRESSOR HRCA"/>
    <property type="match status" value="1"/>
</dbReference>
<dbReference type="PANTHER" id="PTHR34824:SF1">
    <property type="entry name" value="HEAT-INDUCIBLE TRANSCRIPTION REPRESSOR HRCA"/>
    <property type="match status" value="1"/>
</dbReference>
<dbReference type="Pfam" id="PF01628">
    <property type="entry name" value="HrcA"/>
    <property type="match status" value="1"/>
</dbReference>
<dbReference type="PIRSF" id="PIRSF005485">
    <property type="entry name" value="HrcA"/>
    <property type="match status" value="1"/>
</dbReference>
<dbReference type="SUPFAM" id="SSF55781">
    <property type="entry name" value="GAF domain-like"/>
    <property type="match status" value="1"/>
</dbReference>
<dbReference type="SUPFAM" id="SSF46785">
    <property type="entry name" value="Winged helix' DNA-binding domain"/>
    <property type="match status" value="1"/>
</dbReference>
<keyword id="KW-1185">Reference proteome</keyword>
<keyword id="KW-0678">Repressor</keyword>
<keyword id="KW-0346">Stress response</keyword>
<keyword id="KW-0804">Transcription</keyword>
<keyword id="KW-0805">Transcription regulation</keyword>
<accession>Q5NRL5</accession>